<sequence length="263" mass="28601">MKKITISDLNNWKEVGEKFASITAYDASFAKIFEEQSMPVIIVGDSLGSVIQGKPTTLDVSIEELVYHTKCVRAGSPNAFIISDLPFMSYHTPEAACGSAAKLMKAGANMVKIEGGSWLINTVKMLTERAVPVCAHLGLMPQAVNIYGGYKLQGKTEEQATKMLENAKELQRAGAQALILECIPAKLARQITLELHIPVIGIGAGNDTDGQVLVMHDILGISANYIPRFSRNFLAETGSIEAAVKKYIDEVKQQTFPGEKHCF</sequence>
<proteinExistence type="inferred from homology"/>
<organism>
    <name type="scientific">Aliivibrio fischeri (strain ATCC 700601 / ES114)</name>
    <name type="common">Vibrio fischeri</name>
    <dbReference type="NCBI Taxonomy" id="312309"/>
    <lineage>
        <taxon>Bacteria</taxon>
        <taxon>Pseudomonadati</taxon>
        <taxon>Pseudomonadota</taxon>
        <taxon>Gammaproteobacteria</taxon>
        <taxon>Vibrionales</taxon>
        <taxon>Vibrionaceae</taxon>
        <taxon>Aliivibrio</taxon>
    </lineage>
</organism>
<comment type="function">
    <text evidence="1">Catalyzes the reversible reaction in which hydroxymethyl group from 5,10-methylenetetrahydrofolate is transferred onto alpha-ketoisovalerate to form ketopantoate.</text>
</comment>
<comment type="catalytic activity">
    <reaction evidence="1">
        <text>3-methyl-2-oxobutanoate + (6R)-5,10-methylene-5,6,7,8-tetrahydrofolate + H2O = 2-dehydropantoate + (6S)-5,6,7,8-tetrahydrofolate</text>
        <dbReference type="Rhea" id="RHEA:11824"/>
        <dbReference type="ChEBI" id="CHEBI:11561"/>
        <dbReference type="ChEBI" id="CHEBI:11851"/>
        <dbReference type="ChEBI" id="CHEBI:15377"/>
        <dbReference type="ChEBI" id="CHEBI:15636"/>
        <dbReference type="ChEBI" id="CHEBI:57453"/>
        <dbReference type="EC" id="2.1.2.11"/>
    </reaction>
</comment>
<comment type="cofactor">
    <cofactor evidence="1">
        <name>Mg(2+)</name>
        <dbReference type="ChEBI" id="CHEBI:18420"/>
    </cofactor>
    <text evidence="1">Binds 1 Mg(2+) ion per subunit.</text>
</comment>
<comment type="pathway">
    <text evidence="1">Cofactor biosynthesis; (R)-pantothenate biosynthesis; (R)-pantoate from 3-methyl-2-oxobutanoate: step 1/2.</text>
</comment>
<comment type="subunit">
    <text evidence="1">Homodecamer; pentamer of dimers.</text>
</comment>
<comment type="subcellular location">
    <subcellularLocation>
        <location evidence="1">Cytoplasm</location>
    </subcellularLocation>
</comment>
<comment type="similarity">
    <text evidence="1">Belongs to the PanB family.</text>
</comment>
<comment type="sequence caution" evidence="2">
    <conflict type="erroneous initiation">
        <sequence resource="EMBL-CDS" id="AAW87698"/>
    </conflict>
</comment>
<evidence type="ECO:0000255" key="1">
    <source>
        <dbReference type="HAMAP-Rule" id="MF_00156"/>
    </source>
</evidence>
<evidence type="ECO:0000305" key="2"/>
<reference key="1">
    <citation type="journal article" date="2005" name="Proc. Natl. Acad. Sci. U.S.A.">
        <title>Complete genome sequence of Vibrio fischeri: a symbiotic bacterium with pathogenic congeners.</title>
        <authorList>
            <person name="Ruby E.G."/>
            <person name="Urbanowski M."/>
            <person name="Campbell J."/>
            <person name="Dunn A."/>
            <person name="Faini M."/>
            <person name="Gunsalus R."/>
            <person name="Lostroh P."/>
            <person name="Lupp C."/>
            <person name="McCann J."/>
            <person name="Millikan D."/>
            <person name="Schaefer A."/>
            <person name="Stabb E."/>
            <person name="Stevens A."/>
            <person name="Visick K."/>
            <person name="Whistler C."/>
            <person name="Greenberg E.P."/>
        </authorList>
    </citation>
    <scope>NUCLEOTIDE SEQUENCE [LARGE SCALE GENOMIC DNA]</scope>
    <source>
        <strain>ATCC 700601 / ES114</strain>
    </source>
</reference>
<keyword id="KW-0963">Cytoplasm</keyword>
<keyword id="KW-0460">Magnesium</keyword>
<keyword id="KW-0479">Metal-binding</keyword>
<keyword id="KW-0566">Pantothenate biosynthesis</keyword>
<keyword id="KW-1185">Reference proteome</keyword>
<keyword id="KW-0808">Transferase</keyword>
<dbReference type="EC" id="2.1.2.11" evidence="1"/>
<dbReference type="EMBL" id="CP000021">
    <property type="protein sequence ID" value="AAW87698.1"/>
    <property type="status" value="ALT_INIT"/>
    <property type="molecule type" value="Genomic_DNA"/>
</dbReference>
<dbReference type="RefSeq" id="WP_047863614.1">
    <property type="nucleotide sequence ID" value="NC_006841.2"/>
</dbReference>
<dbReference type="RefSeq" id="YP_206586.1">
    <property type="nucleotide sequence ID" value="NC_006841.2"/>
</dbReference>
<dbReference type="SMR" id="Q5DZU8"/>
<dbReference type="STRING" id="312309.VF_A0628"/>
<dbReference type="EnsemblBacteria" id="AAW87698">
    <property type="protein sequence ID" value="AAW87698"/>
    <property type="gene ID" value="VF_A0628"/>
</dbReference>
<dbReference type="GeneID" id="54165951"/>
<dbReference type="KEGG" id="vfi:VF_A0628"/>
<dbReference type="PATRIC" id="fig|312309.11.peg.3233"/>
<dbReference type="eggNOG" id="COG0413">
    <property type="taxonomic scope" value="Bacteria"/>
</dbReference>
<dbReference type="HOGENOM" id="CLU_036645_1_0_6"/>
<dbReference type="OrthoDB" id="9781789at2"/>
<dbReference type="UniPathway" id="UPA00028">
    <property type="reaction ID" value="UER00003"/>
</dbReference>
<dbReference type="Proteomes" id="UP000000537">
    <property type="component" value="Chromosome II"/>
</dbReference>
<dbReference type="GO" id="GO:0005737">
    <property type="term" value="C:cytoplasm"/>
    <property type="evidence" value="ECO:0007669"/>
    <property type="project" value="UniProtKB-SubCell"/>
</dbReference>
<dbReference type="GO" id="GO:0003864">
    <property type="term" value="F:3-methyl-2-oxobutanoate hydroxymethyltransferase activity"/>
    <property type="evidence" value="ECO:0007669"/>
    <property type="project" value="UniProtKB-UniRule"/>
</dbReference>
<dbReference type="GO" id="GO:0000287">
    <property type="term" value="F:magnesium ion binding"/>
    <property type="evidence" value="ECO:0007669"/>
    <property type="project" value="TreeGrafter"/>
</dbReference>
<dbReference type="GO" id="GO:0015940">
    <property type="term" value="P:pantothenate biosynthetic process"/>
    <property type="evidence" value="ECO:0007669"/>
    <property type="project" value="UniProtKB-UniRule"/>
</dbReference>
<dbReference type="CDD" id="cd06557">
    <property type="entry name" value="KPHMT-like"/>
    <property type="match status" value="1"/>
</dbReference>
<dbReference type="FunFam" id="3.20.20.60:FF:000003">
    <property type="entry name" value="3-methyl-2-oxobutanoate hydroxymethyltransferase"/>
    <property type="match status" value="1"/>
</dbReference>
<dbReference type="Gene3D" id="3.20.20.60">
    <property type="entry name" value="Phosphoenolpyruvate-binding domains"/>
    <property type="match status" value="1"/>
</dbReference>
<dbReference type="HAMAP" id="MF_00156">
    <property type="entry name" value="PanB"/>
    <property type="match status" value="1"/>
</dbReference>
<dbReference type="InterPro" id="IPR003700">
    <property type="entry name" value="Pantoate_hydroxy_MeTrfase"/>
</dbReference>
<dbReference type="InterPro" id="IPR015813">
    <property type="entry name" value="Pyrv/PenolPyrv_kinase-like_dom"/>
</dbReference>
<dbReference type="InterPro" id="IPR040442">
    <property type="entry name" value="Pyrv_kinase-like_dom_sf"/>
</dbReference>
<dbReference type="NCBIfam" id="TIGR00222">
    <property type="entry name" value="panB"/>
    <property type="match status" value="1"/>
</dbReference>
<dbReference type="NCBIfam" id="NF001452">
    <property type="entry name" value="PRK00311.1"/>
    <property type="match status" value="1"/>
</dbReference>
<dbReference type="PANTHER" id="PTHR20881">
    <property type="entry name" value="3-METHYL-2-OXOBUTANOATE HYDROXYMETHYLTRANSFERASE"/>
    <property type="match status" value="1"/>
</dbReference>
<dbReference type="PANTHER" id="PTHR20881:SF0">
    <property type="entry name" value="3-METHYL-2-OXOBUTANOATE HYDROXYMETHYLTRANSFERASE"/>
    <property type="match status" value="1"/>
</dbReference>
<dbReference type="Pfam" id="PF02548">
    <property type="entry name" value="Pantoate_transf"/>
    <property type="match status" value="1"/>
</dbReference>
<dbReference type="PIRSF" id="PIRSF000388">
    <property type="entry name" value="Pantoate_hydroxy_MeTrfase"/>
    <property type="match status" value="1"/>
</dbReference>
<dbReference type="SUPFAM" id="SSF51621">
    <property type="entry name" value="Phosphoenolpyruvate/pyruvate domain"/>
    <property type="match status" value="1"/>
</dbReference>
<protein>
    <recommendedName>
        <fullName evidence="1">3-methyl-2-oxobutanoate hydroxymethyltransferase 2</fullName>
        <ecNumber evidence="1">2.1.2.11</ecNumber>
    </recommendedName>
    <alternativeName>
        <fullName evidence="1">Ketopantoate hydroxymethyltransferase 2</fullName>
        <shortName evidence="1">KPHMT 2</shortName>
    </alternativeName>
</protein>
<accession>Q5DZU8</accession>
<name>PANB2_ALIF1</name>
<gene>
    <name evidence="1" type="primary">panB2</name>
    <name type="ordered locus">VF_A0628</name>
</gene>
<feature type="chain" id="PRO_0000297409" description="3-methyl-2-oxobutanoate hydroxymethyltransferase 2">
    <location>
        <begin position="1"/>
        <end position="263"/>
    </location>
</feature>
<feature type="active site" description="Proton acceptor" evidence="1">
    <location>
        <position position="181"/>
    </location>
</feature>
<feature type="binding site" evidence="1">
    <location>
        <begin position="45"/>
        <end position="46"/>
    </location>
    <ligand>
        <name>3-methyl-2-oxobutanoate</name>
        <dbReference type="ChEBI" id="CHEBI:11851"/>
    </ligand>
</feature>
<feature type="binding site" evidence="1">
    <location>
        <position position="45"/>
    </location>
    <ligand>
        <name>Mg(2+)</name>
        <dbReference type="ChEBI" id="CHEBI:18420"/>
    </ligand>
</feature>
<feature type="binding site" evidence="1">
    <location>
        <position position="84"/>
    </location>
    <ligand>
        <name>3-methyl-2-oxobutanoate</name>
        <dbReference type="ChEBI" id="CHEBI:11851"/>
    </ligand>
</feature>
<feature type="binding site" evidence="1">
    <location>
        <position position="84"/>
    </location>
    <ligand>
        <name>Mg(2+)</name>
        <dbReference type="ChEBI" id="CHEBI:18420"/>
    </ligand>
</feature>
<feature type="binding site" evidence="1">
    <location>
        <position position="112"/>
    </location>
    <ligand>
        <name>3-methyl-2-oxobutanoate</name>
        <dbReference type="ChEBI" id="CHEBI:11851"/>
    </ligand>
</feature>
<feature type="binding site" evidence="1">
    <location>
        <position position="114"/>
    </location>
    <ligand>
        <name>Mg(2+)</name>
        <dbReference type="ChEBI" id="CHEBI:18420"/>
    </ligand>
</feature>